<proteinExistence type="inferred from homology"/>
<sequence length="128" mass="13751">MPKSVIIPAGSSAPLAPFVPGTLADGVVYVSGTLAFDQHNNVLFADDPKAQTRHVLETIRKVIETAGGTMADVTFNSIFITDWKNYAAINETYAEFFPGDKPARFCIQCGLVKPDALVEIATIAHIAK</sequence>
<dbReference type="EC" id="3.5.-.-" evidence="1"/>
<dbReference type="EMBL" id="AE005174">
    <property type="protein sequence ID" value="AAG55626.1"/>
    <property type="molecule type" value="Genomic_DNA"/>
</dbReference>
<dbReference type="EMBL" id="BA000007">
    <property type="protein sequence ID" value="BAB34679.1"/>
    <property type="molecule type" value="Genomic_DNA"/>
</dbReference>
<dbReference type="PIR" id="F85645">
    <property type="entry name" value="F85645"/>
</dbReference>
<dbReference type="PIR" id="H90785">
    <property type="entry name" value="H90785"/>
</dbReference>
<dbReference type="RefSeq" id="NP_309283.1">
    <property type="nucleotide sequence ID" value="NC_002695.1"/>
</dbReference>
<dbReference type="RefSeq" id="WP_001126784.1">
    <property type="nucleotide sequence ID" value="NZ_VOAI01000026.1"/>
</dbReference>
<dbReference type="SMR" id="Q8XAU5"/>
<dbReference type="STRING" id="155864.Z1509"/>
<dbReference type="GeneID" id="912826"/>
<dbReference type="KEGG" id="ece:Z1509"/>
<dbReference type="KEGG" id="ecs:ECs_1256"/>
<dbReference type="PATRIC" id="fig|386585.9.peg.1359"/>
<dbReference type="eggNOG" id="COG0251">
    <property type="taxonomic scope" value="Bacteria"/>
</dbReference>
<dbReference type="HOGENOM" id="CLU_100715_7_3_6"/>
<dbReference type="OMA" id="IFLTEFK"/>
<dbReference type="Proteomes" id="UP000000558">
    <property type="component" value="Chromosome"/>
</dbReference>
<dbReference type="Proteomes" id="UP000002519">
    <property type="component" value="Chromosome"/>
</dbReference>
<dbReference type="GO" id="GO:0005829">
    <property type="term" value="C:cytosol"/>
    <property type="evidence" value="ECO:0007669"/>
    <property type="project" value="TreeGrafter"/>
</dbReference>
<dbReference type="GO" id="GO:0019239">
    <property type="term" value="F:deaminase activity"/>
    <property type="evidence" value="ECO:0007669"/>
    <property type="project" value="TreeGrafter"/>
</dbReference>
<dbReference type="GO" id="GO:0019740">
    <property type="term" value="P:nitrogen utilization"/>
    <property type="evidence" value="ECO:0007669"/>
    <property type="project" value="UniProtKB-UniRule"/>
</dbReference>
<dbReference type="GO" id="GO:0006212">
    <property type="term" value="P:uracil catabolic process"/>
    <property type="evidence" value="ECO:0007669"/>
    <property type="project" value="UniProtKB-UniRule"/>
</dbReference>
<dbReference type="CDD" id="cd00448">
    <property type="entry name" value="YjgF_YER057c_UK114_family"/>
    <property type="match status" value="1"/>
</dbReference>
<dbReference type="FunFam" id="3.30.1330.40:FF:000003">
    <property type="entry name" value="Putative aminoacrylate peracid reductase RutC"/>
    <property type="match status" value="1"/>
</dbReference>
<dbReference type="Gene3D" id="3.30.1330.40">
    <property type="entry name" value="RutC-like"/>
    <property type="match status" value="1"/>
</dbReference>
<dbReference type="HAMAP" id="MF_00831">
    <property type="entry name" value="RutC"/>
    <property type="match status" value="1"/>
</dbReference>
<dbReference type="InterPro" id="IPR019897">
    <property type="entry name" value="RidA_CS"/>
</dbReference>
<dbReference type="InterPro" id="IPR019898">
    <property type="entry name" value="RutC"/>
</dbReference>
<dbReference type="InterPro" id="IPR035959">
    <property type="entry name" value="RutC-like_sf"/>
</dbReference>
<dbReference type="InterPro" id="IPR006175">
    <property type="entry name" value="YjgF/YER057c/UK114"/>
</dbReference>
<dbReference type="NCBIfam" id="TIGR03610">
    <property type="entry name" value="RutC"/>
    <property type="match status" value="1"/>
</dbReference>
<dbReference type="PANTHER" id="PTHR11803">
    <property type="entry name" value="2-IMINOBUTANOATE/2-IMINOPROPANOATE DEAMINASE RIDA"/>
    <property type="match status" value="1"/>
</dbReference>
<dbReference type="PANTHER" id="PTHR11803:SF58">
    <property type="entry name" value="PROTEIN HMF1-RELATED"/>
    <property type="match status" value="1"/>
</dbReference>
<dbReference type="Pfam" id="PF01042">
    <property type="entry name" value="Ribonuc_L-PSP"/>
    <property type="match status" value="1"/>
</dbReference>
<dbReference type="SUPFAM" id="SSF55298">
    <property type="entry name" value="YjgF-like"/>
    <property type="match status" value="1"/>
</dbReference>
<dbReference type="PROSITE" id="PS01094">
    <property type="entry name" value="UPF0076"/>
    <property type="match status" value="1"/>
</dbReference>
<protein>
    <recommendedName>
        <fullName evidence="1">3-aminoacrylate deaminase RutC</fullName>
        <shortName evidence="1">3-AA deaminase</shortName>
        <ecNumber evidence="1">3.5.-.-</ecNumber>
    </recommendedName>
</protein>
<reference key="1">
    <citation type="journal article" date="2001" name="Nature">
        <title>Genome sequence of enterohaemorrhagic Escherichia coli O157:H7.</title>
        <authorList>
            <person name="Perna N.T."/>
            <person name="Plunkett G. III"/>
            <person name="Burland V."/>
            <person name="Mau B."/>
            <person name="Glasner J.D."/>
            <person name="Rose D.J."/>
            <person name="Mayhew G.F."/>
            <person name="Evans P.S."/>
            <person name="Gregor J."/>
            <person name="Kirkpatrick H.A."/>
            <person name="Posfai G."/>
            <person name="Hackett J."/>
            <person name="Klink S."/>
            <person name="Boutin A."/>
            <person name="Shao Y."/>
            <person name="Miller L."/>
            <person name="Grotbeck E.J."/>
            <person name="Davis N.W."/>
            <person name="Lim A."/>
            <person name="Dimalanta E.T."/>
            <person name="Potamousis K."/>
            <person name="Apodaca J."/>
            <person name="Anantharaman T.S."/>
            <person name="Lin J."/>
            <person name="Yen G."/>
            <person name="Schwartz D.C."/>
            <person name="Welch R.A."/>
            <person name="Blattner F.R."/>
        </authorList>
    </citation>
    <scope>NUCLEOTIDE SEQUENCE [LARGE SCALE GENOMIC DNA]</scope>
    <source>
        <strain>O157:H7 / EDL933 / ATCC 700927 / EHEC</strain>
    </source>
</reference>
<reference key="2">
    <citation type="journal article" date="2001" name="DNA Res.">
        <title>Complete genome sequence of enterohemorrhagic Escherichia coli O157:H7 and genomic comparison with a laboratory strain K-12.</title>
        <authorList>
            <person name="Hayashi T."/>
            <person name="Makino K."/>
            <person name="Ohnishi M."/>
            <person name="Kurokawa K."/>
            <person name="Ishii K."/>
            <person name="Yokoyama K."/>
            <person name="Han C.-G."/>
            <person name="Ohtsubo E."/>
            <person name="Nakayama K."/>
            <person name="Murata T."/>
            <person name="Tanaka M."/>
            <person name="Tobe T."/>
            <person name="Iida T."/>
            <person name="Takami H."/>
            <person name="Honda T."/>
            <person name="Sasakawa C."/>
            <person name="Ogasawara N."/>
            <person name="Yasunaga T."/>
            <person name="Kuhara S."/>
            <person name="Shiba T."/>
            <person name="Hattori M."/>
            <person name="Shinagawa H."/>
        </authorList>
    </citation>
    <scope>NUCLEOTIDE SEQUENCE [LARGE SCALE GENOMIC DNA]</scope>
    <source>
        <strain>O157:H7 / Sakai / RIMD 0509952 / EHEC</strain>
    </source>
</reference>
<keyword id="KW-0378">Hydrolase</keyword>
<keyword id="KW-1185">Reference proteome</keyword>
<feature type="chain" id="PRO_0000402737" description="3-aminoacrylate deaminase RutC">
    <location>
        <begin position="1"/>
        <end position="128"/>
    </location>
</feature>
<accession>Q8XAU5</accession>
<accession>Q7AFN1</accession>
<evidence type="ECO:0000255" key="1">
    <source>
        <dbReference type="HAMAP-Rule" id="MF_00831"/>
    </source>
</evidence>
<name>RUTC_ECO57</name>
<gene>
    <name evidence="1" type="primary">rutC</name>
    <name type="ordered locus">Z1509</name>
    <name type="ordered locus">ECs1256</name>
</gene>
<organism>
    <name type="scientific">Escherichia coli O157:H7</name>
    <dbReference type="NCBI Taxonomy" id="83334"/>
    <lineage>
        <taxon>Bacteria</taxon>
        <taxon>Pseudomonadati</taxon>
        <taxon>Pseudomonadota</taxon>
        <taxon>Gammaproteobacteria</taxon>
        <taxon>Enterobacterales</taxon>
        <taxon>Enterobacteriaceae</taxon>
        <taxon>Escherichia</taxon>
    </lineage>
</organism>
<comment type="function">
    <text evidence="1">Involved in pyrimidine catabolism. Catalyzes the deamination of 3-aminoacrylate to malonic semialdehyde, a reaction that can also occur spontaneously. RutC may facilitate the reaction and modulate the metabolic fitness, rather than catalyzing essential functions.</text>
</comment>
<comment type="catalytic activity">
    <reaction evidence="1">
        <text>(Z)-3-aminoacrylate + H2O + H(+) = 3-oxopropanoate + NH4(+)</text>
        <dbReference type="Rhea" id="RHEA:34947"/>
        <dbReference type="ChEBI" id="CHEBI:15377"/>
        <dbReference type="ChEBI" id="CHEBI:15378"/>
        <dbReference type="ChEBI" id="CHEBI:28938"/>
        <dbReference type="ChEBI" id="CHEBI:33190"/>
        <dbReference type="ChEBI" id="CHEBI:59894"/>
    </reaction>
</comment>
<comment type="subunit">
    <text evidence="1">Homotrimer.</text>
</comment>
<comment type="similarity">
    <text evidence="1">Belongs to the RutC family.</text>
</comment>